<feature type="chain" id="PRO_0000457278" description="Circadian input-output histidine kinase CikA">
    <location>
        <begin position="1"/>
        <end position="750"/>
    </location>
</feature>
<feature type="domain" description="Histidine kinase" evidence="2">
    <location>
        <begin position="385"/>
        <end position="609"/>
    </location>
</feature>
<feature type="domain" description="Response regulatory" evidence="3">
    <location>
        <begin position="631"/>
        <end position="745"/>
    </location>
</feature>
<feature type="region of interest" description="N-terminal domain" evidence="1">
    <location>
        <begin position="1"/>
        <end position="173"/>
    </location>
</feature>
<feature type="region of interest" description="GAF domain" evidence="1">
    <location>
        <begin position="174"/>
        <end position="333"/>
    </location>
</feature>
<feature type="region of interest" description="PsR domain, bind KaiB(fs)" evidence="1">
    <location>
        <begin position="604"/>
        <end position="750"/>
    </location>
</feature>
<feature type="modified residue" description="Phosphohistidine; by autocatalysis" evidence="2">
    <location>
        <position position="388"/>
    </location>
</feature>
<feature type="modified residue" description="4-aspartylphosphate" evidence="3">
    <location>
        <position position="680"/>
    </location>
</feature>
<accession>P74111</accession>
<organism>
    <name type="scientific">Synechocystis sp. (strain ATCC 27184 / PCC 6803 / Kazusa)</name>
    <dbReference type="NCBI Taxonomy" id="1111708"/>
    <lineage>
        <taxon>Bacteria</taxon>
        <taxon>Bacillati</taxon>
        <taxon>Cyanobacteriota</taxon>
        <taxon>Cyanophyceae</taxon>
        <taxon>Synechococcales</taxon>
        <taxon>Merismopediaceae</taxon>
        <taxon>Synechocystis</taxon>
    </lineage>
</organism>
<keyword id="KW-0067">ATP-binding</keyword>
<keyword id="KW-0090">Biological rhythms</keyword>
<keyword id="KW-0131">Cell cycle</keyword>
<keyword id="KW-0132">Cell division</keyword>
<keyword id="KW-0418">Kinase</keyword>
<keyword id="KW-0547">Nucleotide-binding</keyword>
<keyword id="KW-0597">Phosphoprotein</keyword>
<keyword id="KW-1185">Reference proteome</keyword>
<keyword id="KW-0808">Transferase</keyword>
<keyword id="KW-0902">Two-component regulatory system</keyword>
<reference evidence="7" key="1">
    <citation type="journal article" date="1996" name="DNA Res.">
        <title>Sequence analysis of the genome of the unicellular cyanobacterium Synechocystis sp. strain PCC6803. II. Sequence determination of the entire genome and assignment of potential protein-coding regions.</title>
        <authorList>
            <person name="Kaneko T."/>
            <person name="Sato S."/>
            <person name="Kotani H."/>
            <person name="Tanaka A."/>
            <person name="Asamizu E."/>
            <person name="Nakamura Y."/>
            <person name="Miyajima N."/>
            <person name="Hirosawa M."/>
            <person name="Sugiura M."/>
            <person name="Sasamoto S."/>
            <person name="Kimura T."/>
            <person name="Hosouchi T."/>
            <person name="Matsuno A."/>
            <person name="Muraki A."/>
            <person name="Nakazaki N."/>
            <person name="Naruo K."/>
            <person name="Okumura S."/>
            <person name="Shimpo S."/>
            <person name="Takeuchi C."/>
            <person name="Wada T."/>
            <person name="Watanabe A."/>
            <person name="Yamada M."/>
            <person name="Yasuda M."/>
            <person name="Tabata S."/>
        </authorList>
    </citation>
    <scope>NUCLEOTIDE SEQUENCE [LARGE SCALE GENOMIC DNA]</scope>
    <source>
        <strain>ATCC 27184 / PCC 6803 / Kazusa</strain>
    </source>
</reference>
<reference key="2">
    <citation type="journal article" date="2018" name="Mol. Microbiol.">
        <title>The role of the Synechocystis sp. PCC 6803 homolog of the circadian clock output regulator RpaA in day-night transitions.</title>
        <authorList>
            <person name="Koebler C."/>
            <person name="Schultz S.J."/>
            <person name="Kopp D."/>
            <person name="Voigt K."/>
            <person name="Wilde A."/>
        </authorList>
    </citation>
    <scope>INTERACTION WITH RPAA</scope>
    <source>
        <strain>ATCC 27184 / PCC 6803 / Kazusa</strain>
    </source>
</reference>
<dbReference type="EC" id="2.7.13.3" evidence="1"/>
<dbReference type="EMBL" id="BA000022">
    <property type="protein sequence ID" value="BAA18197.1"/>
    <property type="molecule type" value="Genomic_DNA"/>
</dbReference>
<dbReference type="PIR" id="S75636">
    <property type="entry name" value="S75636"/>
</dbReference>
<dbReference type="SMR" id="P74111"/>
<dbReference type="IntAct" id="P74111">
    <property type="interactions" value="3"/>
</dbReference>
<dbReference type="STRING" id="1148.gene:10499070"/>
<dbReference type="PaxDb" id="1148-1653282"/>
<dbReference type="PRIDE" id="P74111"/>
<dbReference type="EnsemblBacteria" id="BAA18197">
    <property type="protein sequence ID" value="BAA18197"/>
    <property type="gene ID" value="BAA18197"/>
</dbReference>
<dbReference type="KEGG" id="syn:slr1969"/>
<dbReference type="eggNOG" id="COG0642">
    <property type="taxonomic scope" value="Bacteria"/>
</dbReference>
<dbReference type="eggNOG" id="COG0745">
    <property type="taxonomic scope" value="Bacteria"/>
</dbReference>
<dbReference type="eggNOG" id="COG2203">
    <property type="taxonomic scope" value="Bacteria"/>
</dbReference>
<dbReference type="InParanoid" id="P74111"/>
<dbReference type="PhylomeDB" id="P74111"/>
<dbReference type="Proteomes" id="UP000001425">
    <property type="component" value="Chromosome"/>
</dbReference>
<dbReference type="GO" id="GO:0005524">
    <property type="term" value="F:ATP binding"/>
    <property type="evidence" value="ECO:0007669"/>
    <property type="project" value="UniProtKB-KW"/>
</dbReference>
<dbReference type="GO" id="GO:0000155">
    <property type="term" value="F:phosphorelay sensor kinase activity"/>
    <property type="evidence" value="ECO:0007669"/>
    <property type="project" value="InterPro"/>
</dbReference>
<dbReference type="GO" id="GO:0051301">
    <property type="term" value="P:cell division"/>
    <property type="evidence" value="ECO:0007669"/>
    <property type="project" value="UniProtKB-KW"/>
</dbReference>
<dbReference type="GO" id="GO:0048511">
    <property type="term" value="P:rhythmic process"/>
    <property type="evidence" value="ECO:0007669"/>
    <property type="project" value="UniProtKB-KW"/>
</dbReference>
<dbReference type="CDD" id="cd16922">
    <property type="entry name" value="HATPase_EvgS-ArcB-TorS-like"/>
    <property type="match status" value="1"/>
</dbReference>
<dbReference type="CDD" id="cd00082">
    <property type="entry name" value="HisKA"/>
    <property type="match status" value="1"/>
</dbReference>
<dbReference type="FunFam" id="1.10.287.130:FF:000195">
    <property type="entry name" value="Hybrid sensory kinase"/>
    <property type="match status" value="1"/>
</dbReference>
<dbReference type="FunFam" id="3.30.565.10:FF:000329">
    <property type="entry name" value="Hybrid sensory kinase"/>
    <property type="match status" value="1"/>
</dbReference>
<dbReference type="Gene3D" id="1.10.287.130">
    <property type="match status" value="1"/>
</dbReference>
<dbReference type="Gene3D" id="3.30.450.40">
    <property type="match status" value="1"/>
</dbReference>
<dbReference type="Gene3D" id="3.40.50.2300">
    <property type="match status" value="1"/>
</dbReference>
<dbReference type="Gene3D" id="3.30.565.10">
    <property type="entry name" value="Histidine kinase-like ATPase, C-terminal domain"/>
    <property type="match status" value="1"/>
</dbReference>
<dbReference type="InterPro" id="IPR011006">
    <property type="entry name" value="CheY-like_superfamily"/>
</dbReference>
<dbReference type="InterPro" id="IPR003018">
    <property type="entry name" value="GAF"/>
</dbReference>
<dbReference type="InterPro" id="IPR029016">
    <property type="entry name" value="GAF-like_dom_sf"/>
</dbReference>
<dbReference type="InterPro" id="IPR036890">
    <property type="entry name" value="HATPase_C_sf"/>
</dbReference>
<dbReference type="InterPro" id="IPR005467">
    <property type="entry name" value="His_kinase_dom"/>
</dbReference>
<dbReference type="InterPro" id="IPR003661">
    <property type="entry name" value="HisK_dim/P_dom"/>
</dbReference>
<dbReference type="InterPro" id="IPR036097">
    <property type="entry name" value="HisK_dim/P_sf"/>
</dbReference>
<dbReference type="InterPro" id="IPR016132">
    <property type="entry name" value="Phyto_chromo_attachment"/>
</dbReference>
<dbReference type="InterPro" id="IPR004358">
    <property type="entry name" value="Sig_transdc_His_kin-like_C"/>
</dbReference>
<dbReference type="InterPro" id="IPR001789">
    <property type="entry name" value="Sig_transdc_resp-reg_receiver"/>
</dbReference>
<dbReference type="PANTHER" id="PTHR43547:SF2">
    <property type="entry name" value="HYBRID SIGNAL TRANSDUCTION HISTIDINE KINASE C"/>
    <property type="match status" value="1"/>
</dbReference>
<dbReference type="PANTHER" id="PTHR43547">
    <property type="entry name" value="TWO-COMPONENT HISTIDINE KINASE"/>
    <property type="match status" value="1"/>
</dbReference>
<dbReference type="Pfam" id="PF01590">
    <property type="entry name" value="GAF"/>
    <property type="match status" value="1"/>
</dbReference>
<dbReference type="Pfam" id="PF02518">
    <property type="entry name" value="HATPase_c"/>
    <property type="match status" value="1"/>
</dbReference>
<dbReference type="Pfam" id="PF00512">
    <property type="entry name" value="HisKA"/>
    <property type="match status" value="1"/>
</dbReference>
<dbReference type="Pfam" id="PF00072">
    <property type="entry name" value="Response_reg"/>
    <property type="match status" value="1"/>
</dbReference>
<dbReference type="PRINTS" id="PR00344">
    <property type="entry name" value="BCTRLSENSOR"/>
</dbReference>
<dbReference type="SMART" id="SM00065">
    <property type="entry name" value="GAF"/>
    <property type="match status" value="1"/>
</dbReference>
<dbReference type="SMART" id="SM00387">
    <property type="entry name" value="HATPase_c"/>
    <property type="match status" value="1"/>
</dbReference>
<dbReference type="SMART" id="SM00388">
    <property type="entry name" value="HisKA"/>
    <property type="match status" value="1"/>
</dbReference>
<dbReference type="SMART" id="SM00448">
    <property type="entry name" value="REC"/>
    <property type="match status" value="1"/>
</dbReference>
<dbReference type="SUPFAM" id="SSF55874">
    <property type="entry name" value="ATPase domain of HSP90 chaperone/DNA topoisomerase II/histidine kinase"/>
    <property type="match status" value="1"/>
</dbReference>
<dbReference type="SUPFAM" id="SSF52172">
    <property type="entry name" value="CheY-like"/>
    <property type="match status" value="1"/>
</dbReference>
<dbReference type="SUPFAM" id="SSF55781">
    <property type="entry name" value="GAF domain-like"/>
    <property type="match status" value="1"/>
</dbReference>
<dbReference type="SUPFAM" id="SSF47384">
    <property type="entry name" value="Homodimeric domain of signal transducing histidine kinase"/>
    <property type="match status" value="1"/>
</dbReference>
<dbReference type="PROSITE" id="PS50109">
    <property type="entry name" value="HIS_KIN"/>
    <property type="match status" value="1"/>
</dbReference>
<dbReference type="PROSITE" id="PS50046">
    <property type="entry name" value="PHYTOCHROME_2"/>
    <property type="match status" value="1"/>
</dbReference>
<dbReference type="PROSITE" id="PS50110">
    <property type="entry name" value="RESPONSE_REGULATORY"/>
    <property type="match status" value="1"/>
</dbReference>
<gene>
    <name evidence="5" type="primary">cikA</name>
    <name evidence="7" type="ordered locus">slr1969</name>
</gene>
<name>CIKA_SYNY3</name>
<protein>
    <recommendedName>
        <fullName evidence="5">Circadian input-output histidine kinase CikA</fullName>
        <ecNumber evidence="1">2.7.13.3</ecNumber>
    </recommendedName>
</protein>
<evidence type="ECO:0000250" key="1">
    <source>
        <dbReference type="UniProtKB" id="Q9KHI5"/>
    </source>
</evidence>
<evidence type="ECO:0000255" key="2">
    <source>
        <dbReference type="PROSITE-ProRule" id="PRU00107"/>
    </source>
</evidence>
<evidence type="ECO:0000255" key="3">
    <source>
        <dbReference type="PROSITE-ProRule" id="PRU00169"/>
    </source>
</evidence>
<evidence type="ECO:0000269" key="4">
    <source>
    </source>
</evidence>
<evidence type="ECO:0000303" key="5">
    <source>
    </source>
</evidence>
<evidence type="ECO:0000305" key="6"/>
<evidence type="ECO:0000312" key="7">
    <source>
        <dbReference type="EMBL" id="BAA18197.1"/>
    </source>
</evidence>
<proteinExistence type="evidence at protein level"/>
<sequence>MLPAFSPIFRRLLPAVTFERLLRFWRTLAQQTGDGVQCFVGDLPSSLKPPPGPSVLEAEVDHRFALLVSPGQWALLEGEQISPHHYAVSITFAQGIIEDFIQKQNLPVVAEAMPHRPETPSGPTIAEQLTLGLLEILNSDSTSFSPEPSLQDSLQASQVKLLSQVIAQIRQSLDLSEILNNAVTAVQKFLFVDRLVIYQFHYSQPSLTPLEENQIPAPRPRQQYGEVTYEARRSPEIDTMLGIMTENDCFSQVFSYEQKYLKGAVVAVSDIENHYSSSYCLVGLLQRYQVRAKLVAPIIVEGQLWGLLIAHQCHHPRQWLDSEKNFLGQIGEHLAVAIVQSLLYSEVQKQKNNFEKRVIERTKELRDTLMAAQAANLLKSQFINNISHELRTPLTSIIGLSATLLRWFDHPASLPPAKQQYYLLNIQENGKKLLDQINSIIQLSQLESGQTALNCQSFSLHTLAQTVIHSLLGVAIKQQINLELDYQINVGQDQFCADQERLDQILTQLLNNALKFTPAEGTVILRIWKESNQAIFQVEDTGIGINEQQLPVLFEAFKVAGDSYTSFYETGGVGLALTKQLVELHGGYIEVESSPGQGTIFTTVIPQQNFPPTTKGQVQDKLDAAMPFNSSVIVIEQDEEIATLICELLTVANYQVIWLIDTTNALQQVELLQPGLIIVDGDFVDVTEVTRGIKKSRRISKVTVFLLSESLSSAEWQALSQKGIDDYLLKPLQPELLLQRVQSIQQEPLR</sequence>
<comment type="function">
    <text evidence="1">Functions in an input pathway to the Kai circadian clock. Senses oxidized quinones via its C-terminal pseudo-receiver domain, providing a link between cell metabolism and the clock. Affects the ratio of phosphorylated to unphosphorylated KaiC, binds quinones via its pseudo-receptor domain. Quinone-binding destabilizes the protein rapidly. Autophosphorylates, does not transfer the phosphate to its pseudo-receiver (PsR) domain. May play a role in cell division.</text>
</comment>
<comment type="function">
    <text evidence="1">Also functions in a two-component CikA/RpaA output pathway from the circadian clock, negatively regulating kaiBC expression independently of labA and of sasA. One of three clock output pathways. Dephosphorylates phospho-RpaA, enhanced by KaiB and KaiC, has only modest kinase activity on RpaA.</text>
</comment>
<comment type="catalytic activity">
    <reaction evidence="1">
        <text>ATP + protein L-histidine = ADP + protein N-phospho-L-histidine.</text>
        <dbReference type="EC" id="2.7.13.3"/>
    </reaction>
</comment>
<comment type="subunit">
    <text evidence="1 4">Homodimer. Part of the circadian clock (KaiA, KaiB, KaiC, CikA, RpaA, SasA), the composition of which varies during the circadian cycle. KaiA and CikA compete for binding to KaiB(fs) (By similarity). Interacts with RpaA (PubMed:30216574).</text>
</comment>
<comment type="domain">
    <text evidence="1">The N-terminal domain is followed by a GAF (phytochrome-like) domain that lacks the conserved Cys residue for ligand binding, a histidine kinase domain and a C-terminal response regulator domain (pseudo-receiver domain, PsR).</text>
</comment>
<comment type="similarity">
    <text evidence="6">In the N-terminal section; belongs to the phytochrome family.</text>
</comment>